<protein>
    <recommendedName>
        <fullName evidence="1">Large ribosomal subunit protein uL14c</fullName>
    </recommendedName>
    <alternativeName>
        <fullName evidence="2">50S ribosomal protein L14, plastid</fullName>
    </alternativeName>
</protein>
<proteinExistence type="inferred from homology"/>
<dbReference type="EMBL" id="AJ294725">
    <property type="protein sequence ID" value="CAC24601.1"/>
    <property type="molecule type" value="Genomic_DNA"/>
</dbReference>
<dbReference type="RefSeq" id="NP_074990.1">
    <property type="nucleotide sequence ID" value="NC_002652.1"/>
</dbReference>
<dbReference type="SMR" id="P58139"/>
<dbReference type="GeneID" id="802511"/>
<dbReference type="GO" id="GO:0022625">
    <property type="term" value="C:cytosolic large ribosomal subunit"/>
    <property type="evidence" value="ECO:0007669"/>
    <property type="project" value="TreeGrafter"/>
</dbReference>
<dbReference type="GO" id="GO:0009536">
    <property type="term" value="C:plastid"/>
    <property type="evidence" value="ECO:0007669"/>
    <property type="project" value="UniProtKB-SubCell"/>
</dbReference>
<dbReference type="GO" id="GO:0070180">
    <property type="term" value="F:large ribosomal subunit rRNA binding"/>
    <property type="evidence" value="ECO:0007669"/>
    <property type="project" value="TreeGrafter"/>
</dbReference>
<dbReference type="GO" id="GO:0003735">
    <property type="term" value="F:structural constituent of ribosome"/>
    <property type="evidence" value="ECO:0007669"/>
    <property type="project" value="InterPro"/>
</dbReference>
<dbReference type="GO" id="GO:0006412">
    <property type="term" value="P:translation"/>
    <property type="evidence" value="ECO:0007669"/>
    <property type="project" value="InterPro"/>
</dbReference>
<dbReference type="CDD" id="cd00337">
    <property type="entry name" value="Ribosomal_uL14"/>
    <property type="match status" value="1"/>
</dbReference>
<dbReference type="Gene3D" id="2.40.150.20">
    <property type="entry name" value="Ribosomal protein L14"/>
    <property type="match status" value="1"/>
</dbReference>
<dbReference type="HAMAP" id="MF_01367">
    <property type="entry name" value="Ribosomal_uL14"/>
    <property type="match status" value="1"/>
</dbReference>
<dbReference type="InterPro" id="IPR000218">
    <property type="entry name" value="Ribosomal_uL14"/>
</dbReference>
<dbReference type="InterPro" id="IPR005745">
    <property type="entry name" value="Ribosomal_uL14_bac-type"/>
</dbReference>
<dbReference type="InterPro" id="IPR036853">
    <property type="entry name" value="Ribosomal_uL14_sf"/>
</dbReference>
<dbReference type="NCBIfam" id="TIGR01067">
    <property type="entry name" value="rplN_bact"/>
    <property type="match status" value="1"/>
</dbReference>
<dbReference type="PANTHER" id="PTHR11761">
    <property type="entry name" value="50S/60S RIBOSOMAL PROTEIN L14/L23"/>
    <property type="match status" value="1"/>
</dbReference>
<dbReference type="PANTHER" id="PTHR11761:SF3">
    <property type="entry name" value="LARGE RIBOSOMAL SUBUNIT PROTEIN UL14M"/>
    <property type="match status" value="1"/>
</dbReference>
<dbReference type="Pfam" id="PF00238">
    <property type="entry name" value="Ribosomal_L14"/>
    <property type="match status" value="1"/>
</dbReference>
<dbReference type="SMART" id="SM01374">
    <property type="entry name" value="Ribosomal_L14"/>
    <property type="match status" value="1"/>
</dbReference>
<dbReference type="SUPFAM" id="SSF50193">
    <property type="entry name" value="Ribosomal protein L14"/>
    <property type="match status" value="1"/>
</dbReference>
<geneLocation type="non-photosynthetic plastid"/>
<reference key="1">
    <citation type="journal article" date="2000" name="Protist">
        <title>Complete gene map of the plastid genome of the nonphotosynthetic euglenoid flagellate Astasia longa.</title>
        <authorList>
            <person name="Gockel G."/>
            <person name="Hachtel W."/>
        </authorList>
    </citation>
    <scope>NUCLEOTIDE SEQUENCE [LARGE SCALE GENOMIC DNA]</scope>
    <source>
        <strain>CCAP 1204-17a</strain>
    </source>
</reference>
<comment type="function">
    <text evidence="1">Binds to 23S rRNA.</text>
</comment>
<comment type="subunit">
    <text evidence="1">Part of the 50S ribosomal subunit.</text>
</comment>
<comment type="subcellular location">
    <subcellularLocation>
        <location>Plastid</location>
    </subcellularLocation>
</comment>
<comment type="similarity">
    <text evidence="1">Belongs to the universal ribosomal protein uL14 family.</text>
</comment>
<feature type="chain" id="PRO_0000128583" description="Large ribosomal subunit protein uL14c">
    <location>
        <begin position="1"/>
        <end position="122"/>
    </location>
</feature>
<name>RK14_EUGLO</name>
<accession>P58139</accession>
<evidence type="ECO:0000255" key="1">
    <source>
        <dbReference type="HAMAP-Rule" id="MF_01367"/>
    </source>
</evidence>
<evidence type="ECO:0000305" key="2"/>
<sequence length="122" mass="13614">MIQTQTYLNVSDNSGAKKIMCISIISTKRKYAKIGDTIIAVVKKASPNKIIKKSMIVKALIIRTTKPLYRKHNNMYISFNENAAIIINTDNTLKGTNIFGPVPRELMNIGFTNLNSTAKLII</sequence>
<organism>
    <name type="scientific">Euglena longa</name>
    <name type="common">Euglenophycean alga</name>
    <name type="synonym">Astasia longa</name>
    <dbReference type="NCBI Taxonomy" id="3037"/>
    <lineage>
        <taxon>Eukaryota</taxon>
        <taxon>Discoba</taxon>
        <taxon>Euglenozoa</taxon>
        <taxon>Euglenida</taxon>
        <taxon>Spirocuta</taxon>
        <taxon>Euglenophyceae</taxon>
        <taxon>Euglenales</taxon>
        <taxon>Euglenaceae</taxon>
        <taxon>Euglena</taxon>
    </lineage>
</organism>
<gene>
    <name evidence="1" type="primary">rpl14</name>
</gene>
<keyword id="KW-0934">Plastid</keyword>
<keyword id="KW-0687">Ribonucleoprotein</keyword>
<keyword id="KW-0689">Ribosomal protein</keyword>
<keyword id="KW-0694">RNA-binding</keyword>
<keyword id="KW-0699">rRNA-binding</keyword>